<proteinExistence type="inferred from homology"/>
<accession>B7NNT6</accession>
<name>ARNT_ECO7I</name>
<evidence type="ECO:0000255" key="1">
    <source>
        <dbReference type="HAMAP-Rule" id="MF_01165"/>
    </source>
</evidence>
<keyword id="KW-0997">Cell inner membrane</keyword>
<keyword id="KW-1003">Cell membrane</keyword>
<keyword id="KW-0328">Glycosyltransferase</keyword>
<keyword id="KW-0441">Lipid A biosynthesis</keyword>
<keyword id="KW-0444">Lipid biosynthesis</keyword>
<keyword id="KW-0443">Lipid metabolism</keyword>
<keyword id="KW-0448">Lipopolysaccharide biosynthesis</keyword>
<keyword id="KW-0472">Membrane</keyword>
<keyword id="KW-0808">Transferase</keyword>
<keyword id="KW-0812">Transmembrane</keyword>
<keyword id="KW-1133">Transmembrane helix</keyword>
<feature type="chain" id="PRO_0000379999" description="Undecaprenyl phosphate-alpha-4-amino-4-deoxy-L-arabinose arabinosyl transferase">
    <location>
        <begin position="1"/>
        <end position="550"/>
    </location>
</feature>
<feature type="transmembrane region" description="Helical" evidence="1">
    <location>
        <begin position="7"/>
        <end position="27"/>
    </location>
</feature>
<feature type="transmembrane region" description="Helical" evidence="1">
    <location>
        <begin position="81"/>
        <end position="101"/>
    </location>
</feature>
<feature type="transmembrane region" description="Helical" evidence="1">
    <location>
        <begin position="111"/>
        <end position="133"/>
    </location>
</feature>
<feature type="transmembrane region" description="Helical" evidence="1">
    <location>
        <begin position="137"/>
        <end position="154"/>
    </location>
</feature>
<feature type="transmembrane region" description="Helical" evidence="1">
    <location>
        <begin position="165"/>
        <end position="185"/>
    </location>
</feature>
<feature type="transmembrane region" description="Helical" evidence="1">
    <location>
        <begin position="204"/>
        <end position="224"/>
    </location>
</feature>
<feature type="transmembrane region" description="Helical" evidence="1">
    <location>
        <begin position="255"/>
        <end position="275"/>
    </location>
</feature>
<feature type="transmembrane region" description="Helical" evidence="1">
    <location>
        <begin position="288"/>
        <end position="308"/>
    </location>
</feature>
<feature type="transmembrane region" description="Helical" evidence="1">
    <location>
        <begin position="315"/>
        <end position="335"/>
    </location>
</feature>
<feature type="transmembrane region" description="Helical" evidence="1">
    <location>
        <begin position="346"/>
        <end position="366"/>
    </location>
</feature>
<feature type="transmembrane region" description="Helical" evidence="1">
    <location>
        <begin position="382"/>
        <end position="402"/>
    </location>
</feature>
<feature type="transmembrane region" description="Helical" evidence="1">
    <location>
        <begin position="406"/>
        <end position="426"/>
    </location>
</feature>
<reference key="1">
    <citation type="journal article" date="2009" name="PLoS Genet.">
        <title>Organised genome dynamics in the Escherichia coli species results in highly diverse adaptive paths.</title>
        <authorList>
            <person name="Touchon M."/>
            <person name="Hoede C."/>
            <person name="Tenaillon O."/>
            <person name="Barbe V."/>
            <person name="Baeriswyl S."/>
            <person name="Bidet P."/>
            <person name="Bingen E."/>
            <person name="Bonacorsi S."/>
            <person name="Bouchier C."/>
            <person name="Bouvet O."/>
            <person name="Calteau A."/>
            <person name="Chiapello H."/>
            <person name="Clermont O."/>
            <person name="Cruveiller S."/>
            <person name="Danchin A."/>
            <person name="Diard M."/>
            <person name="Dossat C."/>
            <person name="Karoui M.E."/>
            <person name="Frapy E."/>
            <person name="Garry L."/>
            <person name="Ghigo J.M."/>
            <person name="Gilles A.M."/>
            <person name="Johnson J."/>
            <person name="Le Bouguenec C."/>
            <person name="Lescat M."/>
            <person name="Mangenot S."/>
            <person name="Martinez-Jehanne V."/>
            <person name="Matic I."/>
            <person name="Nassif X."/>
            <person name="Oztas S."/>
            <person name="Petit M.A."/>
            <person name="Pichon C."/>
            <person name="Rouy Z."/>
            <person name="Ruf C.S."/>
            <person name="Schneider D."/>
            <person name="Tourret J."/>
            <person name="Vacherie B."/>
            <person name="Vallenet D."/>
            <person name="Medigue C."/>
            <person name="Rocha E.P.C."/>
            <person name="Denamur E."/>
        </authorList>
    </citation>
    <scope>NUCLEOTIDE SEQUENCE [LARGE SCALE GENOMIC DNA]</scope>
    <source>
        <strain>IAI39 / ExPEC</strain>
    </source>
</reference>
<sequence length="550" mass="62534">MKSVRYLIGLFAFIACYYLLPISTRLLWQPDETRYAEISREMLASGDWIVPHLLGLRYFEKPIAGYWINSIGQWLFGANNFGVRAGVIFATLLTAALVTWFTLRLWRDKRLALLATVIYLSLFIVYAIGTYAVLDPFIAFWLVAGMCSFWLAMQAQTWKGKSAGFLLLGITCGMGVMTKGFLALAVPVLSVLPWVATQKRWKDLFIYGWLAVISCVLTVLPWGLAIAQREPDFWHYFFWVEHIQRFALDDAQHRAPFWYYVPVIIAGSLPWLGLLPGALYTGWKNRKHSATVYLLSWTIMPLLFFSVAKGKLPTYILSCFASLAMLMAHYALLAAKNNPLALRINGWINIAFGVTGIIATFVVSPWGPMNTPVWQTFESYKVFCAWSIFSLWAFFGWYTLTNVEKTWSFAALCPLGLALLVGFSIPDRVMEGKHPQFFVEMTQESLQPSRYILTDSVGVAAGLAWSLQRDDIIMYRQTGELKYGLNYPDAKGRFVSGDEFANWLNQHRQEGIITLVLSVDRDEDINSLAIPPADAIDRQERLVLIQYRPK</sequence>
<protein>
    <recommendedName>
        <fullName evidence="1">Undecaprenyl phosphate-alpha-4-amino-4-deoxy-L-arabinose arabinosyl transferase</fullName>
        <ecNumber evidence="1">2.4.2.43</ecNumber>
    </recommendedName>
    <alternativeName>
        <fullName evidence="1">4-amino-4-deoxy-L-arabinose lipid A transferase</fullName>
    </alternativeName>
    <alternativeName>
        <fullName evidence="1">Lipid IV(A) 4-amino-4-deoxy-L-arabinosyltransferase</fullName>
    </alternativeName>
    <alternativeName>
        <fullName evidence="1">Undecaprenyl phosphate-alpha-L-Ara4N transferase</fullName>
    </alternativeName>
</protein>
<dbReference type="EC" id="2.4.2.43" evidence="1"/>
<dbReference type="EMBL" id="CU928164">
    <property type="protein sequence ID" value="CAR18530.1"/>
    <property type="molecule type" value="Genomic_DNA"/>
</dbReference>
<dbReference type="RefSeq" id="WP_000844050.1">
    <property type="nucleotide sequence ID" value="NC_011750.1"/>
</dbReference>
<dbReference type="RefSeq" id="YP_002408360.1">
    <property type="nucleotide sequence ID" value="NC_011750.1"/>
</dbReference>
<dbReference type="SMR" id="B7NNT6"/>
<dbReference type="STRING" id="585057.ECIAI39_2404"/>
<dbReference type="CAZy" id="GT83">
    <property type="family name" value="Glycosyltransferase Family 83"/>
</dbReference>
<dbReference type="KEGG" id="ect:ECIAI39_2404"/>
<dbReference type="PATRIC" id="fig|585057.6.peg.2506"/>
<dbReference type="HOGENOM" id="CLU_019200_2_1_6"/>
<dbReference type="UniPathway" id="UPA00037"/>
<dbReference type="Proteomes" id="UP000000749">
    <property type="component" value="Chromosome"/>
</dbReference>
<dbReference type="GO" id="GO:0005886">
    <property type="term" value="C:plasma membrane"/>
    <property type="evidence" value="ECO:0007669"/>
    <property type="project" value="UniProtKB-SubCell"/>
</dbReference>
<dbReference type="GO" id="GO:0103015">
    <property type="term" value="F:4-amino-4-deoxy-L-arabinose transferase activity"/>
    <property type="evidence" value="ECO:0007669"/>
    <property type="project" value="UniProtKB-EC"/>
</dbReference>
<dbReference type="GO" id="GO:0000030">
    <property type="term" value="F:mannosyltransferase activity"/>
    <property type="evidence" value="ECO:0007669"/>
    <property type="project" value="InterPro"/>
</dbReference>
<dbReference type="GO" id="GO:0009245">
    <property type="term" value="P:lipid A biosynthetic process"/>
    <property type="evidence" value="ECO:0007669"/>
    <property type="project" value="UniProtKB-UniRule"/>
</dbReference>
<dbReference type="GO" id="GO:0009103">
    <property type="term" value="P:lipopolysaccharide biosynthetic process"/>
    <property type="evidence" value="ECO:0007669"/>
    <property type="project" value="UniProtKB-KW"/>
</dbReference>
<dbReference type="GO" id="GO:0006493">
    <property type="term" value="P:protein O-linked glycosylation"/>
    <property type="evidence" value="ECO:0007669"/>
    <property type="project" value="InterPro"/>
</dbReference>
<dbReference type="GO" id="GO:0010041">
    <property type="term" value="P:response to iron(III) ion"/>
    <property type="evidence" value="ECO:0007669"/>
    <property type="project" value="TreeGrafter"/>
</dbReference>
<dbReference type="HAMAP" id="MF_01165">
    <property type="entry name" value="ArnT_transfer"/>
    <property type="match status" value="1"/>
</dbReference>
<dbReference type="InterPro" id="IPR022839">
    <property type="entry name" value="ArnT_tfrase"/>
</dbReference>
<dbReference type="InterPro" id="IPR003342">
    <property type="entry name" value="Glyco_trans_39/83"/>
</dbReference>
<dbReference type="InterPro" id="IPR050297">
    <property type="entry name" value="LipidA_mod_glycosyltrf_83"/>
</dbReference>
<dbReference type="NCBIfam" id="NF009784">
    <property type="entry name" value="PRK13279.1"/>
    <property type="match status" value="1"/>
</dbReference>
<dbReference type="PANTHER" id="PTHR33908">
    <property type="entry name" value="MANNOSYLTRANSFERASE YKCB-RELATED"/>
    <property type="match status" value="1"/>
</dbReference>
<dbReference type="PANTHER" id="PTHR33908:SF3">
    <property type="entry name" value="UNDECAPRENYL PHOSPHATE-ALPHA-4-AMINO-4-DEOXY-L-ARABINOSE ARABINOSYL TRANSFERASE"/>
    <property type="match status" value="1"/>
</dbReference>
<dbReference type="Pfam" id="PF02366">
    <property type="entry name" value="PMT"/>
    <property type="match status" value="1"/>
</dbReference>
<gene>
    <name evidence="1" type="primary">arnT</name>
    <name type="ordered locus">ECIAI39_2404</name>
</gene>
<organism>
    <name type="scientific">Escherichia coli O7:K1 (strain IAI39 / ExPEC)</name>
    <dbReference type="NCBI Taxonomy" id="585057"/>
    <lineage>
        <taxon>Bacteria</taxon>
        <taxon>Pseudomonadati</taxon>
        <taxon>Pseudomonadota</taxon>
        <taxon>Gammaproteobacteria</taxon>
        <taxon>Enterobacterales</taxon>
        <taxon>Enterobacteriaceae</taxon>
        <taxon>Escherichia</taxon>
    </lineage>
</organism>
<comment type="function">
    <text evidence="1">Catalyzes the transfer of the L-Ara4N moiety of the glycolipid undecaprenyl phosphate-alpha-L-Ara4N to lipid A. The modified arabinose is attached to lipid A and is required for resistance to polymyxin and cationic antimicrobial peptides.</text>
</comment>
<comment type="catalytic activity">
    <reaction evidence="1">
        <text>4-amino-4-deoxy-alpha-L-arabinopyranosyl di-trans,octa-cis-undecaprenyl phosphate + lipid IVA = lipid IIA + di-trans,octa-cis-undecaprenyl phosphate.</text>
        <dbReference type="EC" id="2.4.2.43"/>
    </reaction>
</comment>
<comment type="pathway">
    <text evidence="1">Lipopolysaccharide metabolism; 4-amino-4-deoxy-beta-L-arabinose-lipid A biosynthesis.</text>
</comment>
<comment type="subcellular location">
    <subcellularLocation>
        <location evidence="1">Cell inner membrane</location>
        <topology evidence="1">Multi-pass membrane protein</topology>
    </subcellularLocation>
</comment>
<comment type="similarity">
    <text evidence="1">Belongs to the glycosyltransferase 83 family.</text>
</comment>